<dbReference type="EMBL" id="AB015478">
    <property type="protein sequence ID" value="BAB11059.1"/>
    <property type="molecule type" value="Genomic_DNA"/>
</dbReference>
<dbReference type="EMBL" id="CP002688">
    <property type="protein sequence ID" value="AED96172.1"/>
    <property type="molecule type" value="Genomic_DNA"/>
</dbReference>
<dbReference type="EMBL" id="CP002688">
    <property type="protein sequence ID" value="AED96173.1"/>
    <property type="molecule type" value="Genomic_DNA"/>
</dbReference>
<dbReference type="EMBL" id="BT029468">
    <property type="protein sequence ID" value="ABK59697.1"/>
    <property type="molecule type" value="mRNA"/>
</dbReference>
<dbReference type="EMBL" id="AK175363">
    <property type="protein sequence ID" value="BAD43126.1"/>
    <property type="status" value="ALT_FRAME"/>
    <property type="molecule type" value="mRNA"/>
</dbReference>
<dbReference type="EMBL" id="AK176564">
    <property type="protein sequence ID" value="BAD44327.1"/>
    <property type="status" value="ALT_FRAME"/>
    <property type="molecule type" value="mRNA"/>
</dbReference>
<dbReference type="RefSeq" id="NP_001032060.1">
    <property type="nucleotide sequence ID" value="NM_001036983.3"/>
</dbReference>
<dbReference type="RefSeq" id="NP_200024.1">
    <property type="nucleotide sequence ID" value="NM_124590.2"/>
</dbReference>
<dbReference type="FunCoup" id="Q9FJ81">
    <property type="interactions" value="754"/>
</dbReference>
<dbReference type="STRING" id="3702.Q9FJ81"/>
<dbReference type="PaxDb" id="3702-AT5G52110.2"/>
<dbReference type="ProteomicsDB" id="223955"/>
<dbReference type="EnsemblPlants" id="AT5G52110.1">
    <property type="protein sequence ID" value="AT5G52110.1"/>
    <property type="gene ID" value="AT5G52110"/>
</dbReference>
<dbReference type="EnsemblPlants" id="AT5G52110.2">
    <property type="protein sequence ID" value="AT5G52110.2"/>
    <property type="gene ID" value="AT5G52110"/>
</dbReference>
<dbReference type="GeneID" id="835287"/>
<dbReference type="Gramene" id="AT5G52110.1">
    <property type="protein sequence ID" value="AT5G52110.1"/>
    <property type="gene ID" value="AT5G52110"/>
</dbReference>
<dbReference type="Gramene" id="AT5G52110.2">
    <property type="protein sequence ID" value="AT5G52110.2"/>
    <property type="gene ID" value="AT5G52110"/>
</dbReference>
<dbReference type="KEGG" id="ath:AT5G52110"/>
<dbReference type="Araport" id="AT5G52110"/>
<dbReference type="TAIR" id="AT5G52110">
    <property type="gene designation" value="HCF208"/>
</dbReference>
<dbReference type="eggNOG" id="ENOG502QQM6">
    <property type="taxonomic scope" value="Eukaryota"/>
</dbReference>
<dbReference type="HOGENOM" id="CLU_079216_0_0_1"/>
<dbReference type="InParanoid" id="Q9FJ81"/>
<dbReference type="OMA" id="FRANSCH"/>
<dbReference type="PhylomeDB" id="Q9FJ81"/>
<dbReference type="PRO" id="PR:Q9FJ81"/>
<dbReference type="Proteomes" id="UP000006548">
    <property type="component" value="Chromosome 5"/>
</dbReference>
<dbReference type="ExpressionAtlas" id="Q9FJ81">
    <property type="expression patterns" value="baseline and differential"/>
</dbReference>
<dbReference type="GO" id="GO:0009507">
    <property type="term" value="C:chloroplast"/>
    <property type="evidence" value="ECO:0000314"/>
    <property type="project" value="TAIR"/>
</dbReference>
<dbReference type="GO" id="GO:0009535">
    <property type="term" value="C:chloroplast thylakoid membrane"/>
    <property type="evidence" value="ECO:0007669"/>
    <property type="project" value="UniProtKB-SubCell"/>
</dbReference>
<dbReference type="GO" id="GO:0010190">
    <property type="term" value="P:cytochrome b6f complex assembly"/>
    <property type="evidence" value="ECO:0000315"/>
    <property type="project" value="TAIR"/>
</dbReference>
<dbReference type="InterPro" id="IPR044970">
    <property type="entry name" value="CCB2"/>
</dbReference>
<dbReference type="InterPro" id="IPR021325">
    <property type="entry name" value="CCB2/CCB4"/>
</dbReference>
<dbReference type="PANTHER" id="PTHR36403">
    <property type="entry name" value="PROTEIN COFACTOR ASSEMBLY OF COMPLEX C SUBUNIT B CCB2, CHLOROPLASTIC"/>
    <property type="match status" value="1"/>
</dbReference>
<dbReference type="PANTHER" id="PTHR36403:SF1">
    <property type="entry name" value="PROTEIN COFACTOR ASSEMBLY OF COMPLEX C SUBUNIT B CCB2, CHLOROPLASTIC"/>
    <property type="match status" value="1"/>
</dbReference>
<dbReference type="Pfam" id="PF11152">
    <property type="entry name" value="CCB2_CCB4"/>
    <property type="match status" value="1"/>
</dbReference>
<sequence length="275" mass="30607">MSIQICNFPFHPKFALQPRAQRSTRIFARTENDSPQSKTSDQQLNLSVLRFTFGIPGFDESYLPRWIGYGFGSLLLLNHFSASAPISESQMRSEALGLSLAAFSIALPYIGKFLKGSVVEQRSLPEEGEQVFVISSNIGDSLKEDLAWATYVLLRNTSTIAVLISVQGELCVRGYWNCPDQMSKAQLHDWFKKKVDEIGLADVKETLYFPQYAGSALSLDILPDGTRSLFVQPLVQNTNEPQKVNGFLLVASTAGYAYSDKDRAWIGAMAEKFRG</sequence>
<feature type="transit peptide" description="Chloroplast" evidence="1">
    <location>
        <begin position="1"/>
        <end position="19"/>
    </location>
</feature>
<feature type="chain" id="PRO_0000433263" description="Protein COFACTOR ASSEMBLY OF COMPLEX C SUBUNIT B CCB2, chloroplastic" evidence="1">
    <location>
        <begin position="20"/>
        <end position="275"/>
    </location>
</feature>
<feature type="topological domain" description="Stromal" evidence="7">
    <location>
        <begin position="20"/>
        <end position="65"/>
    </location>
</feature>
<feature type="transmembrane region" description="Helical" evidence="1">
    <location>
        <begin position="66"/>
        <end position="86"/>
    </location>
</feature>
<feature type="topological domain" description="Lumenal" evidence="7">
    <location>
        <begin position="87"/>
        <end position="93"/>
    </location>
</feature>
<feature type="transmembrane region" description="Helical" evidence="1">
    <location>
        <begin position="94"/>
        <end position="114"/>
    </location>
</feature>
<feature type="topological domain" description="Stromal" evidence="7">
    <location>
        <begin position="115"/>
        <end position="275"/>
    </location>
</feature>
<evidence type="ECO:0000255" key="1"/>
<evidence type="ECO:0000269" key="2">
    <source>
    </source>
</evidence>
<evidence type="ECO:0000269" key="3">
    <source>
    </source>
</evidence>
<evidence type="ECO:0000303" key="4">
    <source>
    </source>
</evidence>
<evidence type="ECO:0000303" key="5">
    <source>
    </source>
</evidence>
<evidence type="ECO:0000305" key="6"/>
<evidence type="ECO:0000305" key="7">
    <source>
    </source>
</evidence>
<evidence type="ECO:0000312" key="8">
    <source>
        <dbReference type="Araport" id="AT5G52110"/>
    </source>
</evidence>
<evidence type="ECO:0000312" key="9">
    <source>
        <dbReference type="EMBL" id="BAB11059.1"/>
    </source>
</evidence>
<accession>Q9FJ81</accession>
<accession>Q67YA4</accession>
<keyword id="KW-0150">Chloroplast</keyword>
<keyword id="KW-0472">Membrane</keyword>
<keyword id="KW-0934">Plastid</keyword>
<keyword id="KW-1185">Reference proteome</keyword>
<keyword id="KW-0793">Thylakoid</keyword>
<keyword id="KW-0809">Transit peptide</keyword>
<keyword id="KW-0812">Transmembrane</keyword>
<keyword id="KW-1133">Transmembrane helix</keyword>
<comment type="function">
    <text evidence="2 3">Required for the biogenesis and accumulation of native cytochrome b6 in the thylakoid membrane. Controls the conversion of apocytochrome b6 to holocytochrome b6. Required for covalent binding of the c-type heme to cytochrome b6.</text>
</comment>
<comment type="subcellular location">
    <subcellularLocation>
        <location evidence="7">Plastid</location>
        <location evidence="7">Chloroplast thylakoid membrane</location>
        <topology evidence="1">Multi-pass membrane protein</topology>
    </subcellularLocation>
</comment>
<comment type="disruption phenotype">
    <text evidence="2 3">High chlorophyll fluorescence phenotype due to an impaired photosynthetic electron flow (PubMed:17971335). Seedling lethal when grown on soil. On agar plates supplied with sucrose, seedlings grow very slowly with a chlorotic phenotype. Deficiency in the accumulation of the subunits of the cytochrome b6f complex and lack of covalent heme binding to cytochrome b6 (PubMed:17971335, PubMed:18593701).</text>
</comment>
<comment type="sequence caution" evidence="6">
    <conflict type="frameshift">
        <sequence resource="EMBL-CDS" id="BAD43126"/>
    </conflict>
</comment>
<comment type="sequence caution" evidence="6">
    <conflict type="frameshift">
        <sequence resource="EMBL-CDS" id="BAD44327"/>
    </conflict>
</comment>
<organism>
    <name type="scientific">Arabidopsis thaliana</name>
    <name type="common">Mouse-ear cress</name>
    <dbReference type="NCBI Taxonomy" id="3702"/>
    <lineage>
        <taxon>Eukaryota</taxon>
        <taxon>Viridiplantae</taxon>
        <taxon>Streptophyta</taxon>
        <taxon>Embryophyta</taxon>
        <taxon>Tracheophyta</taxon>
        <taxon>Spermatophyta</taxon>
        <taxon>Magnoliopsida</taxon>
        <taxon>eudicotyledons</taxon>
        <taxon>Gunneridae</taxon>
        <taxon>Pentapetalae</taxon>
        <taxon>rosids</taxon>
        <taxon>malvids</taxon>
        <taxon>Brassicales</taxon>
        <taxon>Brassicaceae</taxon>
        <taxon>Camelineae</taxon>
        <taxon>Arabidopsis</taxon>
    </lineage>
</organism>
<proteinExistence type="evidence at protein level"/>
<name>CCB2_ARATH</name>
<protein>
    <recommendedName>
        <fullName evidence="6">Protein COFACTOR ASSEMBLY OF COMPLEX C SUBUNIT B CCB2, chloroplastic</fullName>
    </recommendedName>
    <alternativeName>
        <fullName evidence="4">Protein HIGH CHLOROPHYLL FLUORESCENCE 208</fullName>
    </alternativeName>
</protein>
<reference key="1">
    <citation type="journal article" date="1998" name="DNA Res.">
        <title>Structural analysis of Arabidopsis thaliana chromosome 5. VII. Sequence features of the regions of 1,013,767 bp covered by sixteen physically assigned P1 and TAC clones.</title>
        <authorList>
            <person name="Nakamura Y."/>
            <person name="Sato S."/>
            <person name="Asamizu E."/>
            <person name="Kaneko T."/>
            <person name="Kotani H."/>
            <person name="Miyajima N."/>
            <person name="Tabata S."/>
        </authorList>
    </citation>
    <scope>NUCLEOTIDE SEQUENCE [LARGE SCALE GENOMIC DNA]</scope>
    <source>
        <strain>cv. Columbia</strain>
    </source>
</reference>
<reference key="2">
    <citation type="journal article" date="2017" name="Plant J.">
        <title>Araport11: a complete reannotation of the Arabidopsis thaliana reference genome.</title>
        <authorList>
            <person name="Cheng C.Y."/>
            <person name="Krishnakumar V."/>
            <person name="Chan A.P."/>
            <person name="Thibaud-Nissen F."/>
            <person name="Schobel S."/>
            <person name="Town C.D."/>
        </authorList>
    </citation>
    <scope>GENOME REANNOTATION</scope>
    <source>
        <strain>cv. Columbia</strain>
    </source>
</reference>
<reference key="3">
    <citation type="submission" date="2004-09" db="EMBL/GenBank/DDBJ databases">
        <title>Large-scale analysis of RIKEN Arabidopsis full-length (RAFL) cDNAs.</title>
        <authorList>
            <person name="Totoki Y."/>
            <person name="Seki M."/>
            <person name="Ishida J."/>
            <person name="Nakajima M."/>
            <person name="Enju A."/>
            <person name="Kamiya A."/>
            <person name="Narusaka M."/>
            <person name="Shin-i T."/>
            <person name="Nakagawa M."/>
            <person name="Sakamoto N."/>
            <person name="Oishi K."/>
            <person name="Kohara Y."/>
            <person name="Kobayashi M."/>
            <person name="Toyoda A."/>
            <person name="Sakaki Y."/>
            <person name="Sakurai T."/>
            <person name="Iida K."/>
            <person name="Akiyama K."/>
            <person name="Satou M."/>
            <person name="Toyoda T."/>
            <person name="Konagaya A."/>
            <person name="Carninci P."/>
            <person name="Kawai J."/>
            <person name="Hayashizaki Y."/>
            <person name="Shinozaki K."/>
        </authorList>
    </citation>
    <scope>NUCLEOTIDE SEQUENCE [LARGE SCALE MRNA]</scope>
    <source>
        <strain>cv. Columbia</strain>
    </source>
</reference>
<reference key="4">
    <citation type="submission" date="2006-11" db="EMBL/GenBank/DDBJ databases">
        <title>Arabidopsis ORF Clones.</title>
        <authorList>
            <person name="Bautista V.R."/>
            <person name="Kim C.J."/>
            <person name="Chen H."/>
            <person name="Quinitio C."/>
            <person name="Ecker J.R."/>
        </authorList>
    </citation>
    <scope>NUCLEOTIDE SEQUENCE [LARGE SCALE MRNA]</scope>
    <source>
        <strain>cv. Columbia</strain>
    </source>
</reference>
<reference key="5">
    <citation type="journal article" date="2007" name="Plant Cell Physiol.">
        <title>HCF208, a homolog of Chlamydomonas CCB2, is required for accumulation of native cytochrome b6 in Arabidopsis thaliana.</title>
        <authorList>
            <person name="Lyska D."/>
            <person name="Paradies S."/>
            <person name="Meierhoff K."/>
            <person name="Westhoff P."/>
        </authorList>
    </citation>
    <scope>FUNCTION</scope>
    <scope>DISRUPTION PHENOTYPE</scope>
</reference>
<reference key="6">
    <citation type="journal article" date="2008" name="J. Biol. Chem.">
        <title>A novel pathway of cytochrome c biogenesis is involved in the assembly of the cytochrome b6f complex in arabidopsis chloroplasts.</title>
        <authorList>
            <person name="Lezhneva L."/>
            <person name="Kuras R."/>
            <person name="Ephritikhine G."/>
            <person name="de Vitry C."/>
        </authorList>
    </citation>
    <scope>FUNCTION</scope>
    <scope>SUBCELLULAR LOCATION</scope>
    <scope>TOPOLOGY</scope>
    <scope>DISRUPTION PHENOTYPE</scope>
</reference>
<gene>
    <name evidence="5" type="primary">CCB2</name>
    <name evidence="4" type="synonym">HCF208</name>
    <name evidence="8" type="ordered locus">At5g52110</name>
    <name evidence="9" type="ORF">MSG15.21</name>
</gene>